<feature type="chain" id="PRO_0000128305" description="T-complex protein 1 subunit alpha">
    <location>
        <begin position="1"/>
        <end position="556"/>
    </location>
</feature>
<feature type="binding site" evidence="1">
    <location>
        <position position="37"/>
    </location>
    <ligand>
        <name>ADP</name>
        <dbReference type="ChEBI" id="CHEBI:456216"/>
    </ligand>
</feature>
<feature type="binding site" evidence="1">
    <location>
        <position position="37"/>
    </location>
    <ligand>
        <name>ATP</name>
        <dbReference type="ChEBI" id="CHEBI:30616"/>
    </ligand>
</feature>
<feature type="binding site" evidence="1">
    <location>
        <position position="88"/>
    </location>
    <ligand>
        <name>Mg(2+)</name>
        <dbReference type="ChEBI" id="CHEBI:18420"/>
    </ligand>
</feature>
<feature type="binding site" evidence="1">
    <location>
        <position position="89"/>
    </location>
    <ligand>
        <name>ADP</name>
        <dbReference type="ChEBI" id="CHEBI:456216"/>
    </ligand>
</feature>
<feature type="binding site" evidence="1">
    <location>
        <position position="89"/>
    </location>
    <ligand>
        <name>ATP</name>
        <dbReference type="ChEBI" id="CHEBI:30616"/>
    </ligand>
</feature>
<feature type="binding site" evidence="1">
    <location>
        <position position="90"/>
    </location>
    <ligand>
        <name>ADP</name>
        <dbReference type="ChEBI" id="CHEBI:456216"/>
    </ligand>
</feature>
<feature type="binding site" evidence="1">
    <location>
        <position position="90"/>
    </location>
    <ligand>
        <name>ATP</name>
        <dbReference type="ChEBI" id="CHEBI:30616"/>
    </ligand>
</feature>
<feature type="binding site" evidence="1">
    <location>
        <position position="91"/>
    </location>
    <ligand>
        <name>ADP</name>
        <dbReference type="ChEBI" id="CHEBI:456216"/>
    </ligand>
</feature>
<feature type="binding site" evidence="1">
    <location>
        <position position="91"/>
    </location>
    <ligand>
        <name>ATP</name>
        <dbReference type="ChEBI" id="CHEBI:30616"/>
    </ligand>
</feature>
<feature type="binding site" evidence="1">
    <location>
        <position position="92"/>
    </location>
    <ligand>
        <name>ADP</name>
        <dbReference type="ChEBI" id="CHEBI:456216"/>
    </ligand>
</feature>
<feature type="binding site" evidence="1">
    <location>
        <position position="158"/>
    </location>
    <ligand>
        <name>ADP</name>
        <dbReference type="ChEBI" id="CHEBI:456216"/>
    </ligand>
</feature>
<feature type="binding site" evidence="1">
    <location>
        <position position="159"/>
    </location>
    <ligand>
        <name>ADP</name>
        <dbReference type="ChEBI" id="CHEBI:456216"/>
    </ligand>
</feature>
<feature type="binding site" evidence="1">
    <location>
        <position position="412"/>
    </location>
    <ligand>
        <name>ADP</name>
        <dbReference type="ChEBI" id="CHEBI:456216"/>
    </ligand>
</feature>
<feature type="binding site" evidence="1">
    <location>
        <position position="505"/>
    </location>
    <ligand>
        <name>ADP</name>
        <dbReference type="ChEBI" id="CHEBI:456216"/>
    </ligand>
</feature>
<feature type="modified residue" description="N-acetylmethionine" evidence="2">
    <location>
        <position position="1"/>
    </location>
</feature>
<feature type="modified residue" description="Phosphoserine" evidence="1">
    <location>
        <position position="6"/>
    </location>
</feature>
<feature type="modified residue" description="Phosphotyrosine" evidence="1">
    <location>
        <position position="181"/>
    </location>
</feature>
<feature type="modified residue" description="N6-acetyllysine" evidence="1">
    <location>
        <position position="199"/>
    </location>
</feature>
<feature type="modified residue" description="N6-acetyllysine" evidence="6">
    <location>
        <position position="400"/>
    </location>
</feature>
<feature type="modified residue" description="N6-acetyllysine" evidence="6">
    <location>
        <position position="494"/>
    </location>
</feature>
<feature type="modified residue" description="Phosphoserine" evidence="5">
    <location>
        <position position="544"/>
    </location>
</feature>
<feature type="modified residue" description="Phosphoserine" evidence="5">
    <location>
        <position position="551"/>
    </location>
</feature>
<feature type="splice variant" id="VSP_024734" description="In isoform 2." evidence="3">
    <location>
        <begin position="1"/>
        <end position="49"/>
    </location>
</feature>
<feature type="splice variant" id="VSP_024735" description="In isoform 2." evidence="3">
    <original>G</original>
    <variation>M</variation>
    <location>
        <position position="50"/>
    </location>
</feature>
<feature type="sequence conflict" description="In Ref. 1; AAA40337, 3; BAA14356 and 5; BAE30084." evidence="4" ref="1 3 5">
    <original>V</original>
    <variation>I</variation>
    <location>
        <position position="17"/>
    </location>
</feature>
<feature type="sequence conflict" description="In Ref. 1; AAA40337 and 3; BAA14356." evidence="4" ref="1 3">
    <original>F</original>
    <variation>L</variation>
    <location>
        <position position="36"/>
    </location>
</feature>
<feature type="sequence conflict" description="In Ref. 1; AAA40337 and 3; BAA14356." evidence="4" ref="1 3">
    <original>T</original>
    <variation>A</variation>
    <location>
        <position position="140"/>
    </location>
</feature>
<feature type="sequence conflict" description="In Ref. 1; AAA40337 and 3; BAA14356." evidence="4" ref="1 3">
    <original>INA</original>
    <variation>TNT</variation>
    <location>
        <begin position="149"/>
        <end position="151"/>
    </location>
</feature>
<feature type="sequence conflict" description="In Ref. 1; AAA40338." evidence="4" ref="1">
    <original>A</original>
    <variation>T</variation>
    <location>
        <position position="151"/>
    </location>
</feature>
<feature type="sequence conflict" description="In Ref. 5; BAE31381." evidence="4" ref="5">
    <original>L</original>
    <variation>H</variation>
    <location>
        <position position="177"/>
    </location>
</feature>
<feature type="sequence conflict" description="In Ref. 1; AAA40337 and 3; BAA14356." evidence="4" ref="1 3">
    <original>V</original>
    <variation>I</variation>
    <location>
        <position position="192"/>
    </location>
</feature>
<feature type="sequence conflict" description="In Ref. 5; BAE39599." evidence="4" ref="5">
    <original>N</original>
    <variation>D</variation>
    <location>
        <position position="217"/>
    </location>
</feature>
<feature type="sequence conflict" description="In Ref. 5; BAE31381." evidence="4" ref="5">
    <original>K</original>
    <variation>E</variation>
    <location>
        <position position="259"/>
    </location>
</feature>
<feature type="sequence conflict" description="In Ref. 1; AAA40337 and 3; BAA14356." evidence="4" ref="1 3">
    <original>Y</original>
    <variation>C</variation>
    <location>
        <position position="296"/>
    </location>
</feature>
<feature type="sequence conflict" description="In Ref. 1; AAA40337 and 3; BAA14356." evidence="4" ref="1 3">
    <original>H</original>
    <variation>C</variation>
    <location>
        <position position="318"/>
    </location>
</feature>
<feature type="sequence conflict" description="In Ref. 1; AAA40337 and 3; BAA14356." evidence="4" ref="1 3">
    <original>S</original>
    <variation>T</variation>
    <location>
        <position position="326"/>
    </location>
</feature>
<feature type="sequence conflict" description="In Ref. 5; BAE30084." evidence="4" ref="5">
    <original>R</original>
    <variation>Q</variation>
    <location>
        <position position="378"/>
    </location>
</feature>
<feature type="sequence conflict" description="In Ref. 5; BAE30407/BAE31988." evidence="4" ref="5">
    <original>V</original>
    <variation>I</variation>
    <location>
        <position position="402"/>
    </location>
</feature>
<feature type="sequence conflict" description="In Ref. 1; AAA40337 and 3; BAA14356." evidence="4" ref="1 3">
    <original>L</original>
    <variation>S</variation>
    <location>
        <position position="405"/>
    </location>
</feature>
<feature type="sequence conflict" description="In Ref. 1; AAA40338." evidence="4" ref="1">
    <original>S</original>
    <variation>N</variation>
    <location>
        <position position="429"/>
    </location>
</feature>
<feature type="sequence conflict" description="In Ref. 5; BAE31381." evidence="4" ref="5">
    <original>A</original>
    <variation>V</variation>
    <location>
        <position position="439"/>
    </location>
</feature>
<feature type="sequence conflict" description="In Ref. 5; BAE39052." evidence="4" ref="5">
    <original>V</original>
    <variation>M</variation>
    <location>
        <position position="454"/>
    </location>
</feature>
<feature type="sequence conflict" description="In Ref. 5; BAE30407." evidence="4" ref="5">
    <original>K</original>
    <variation>N</variation>
    <location>
        <position position="494"/>
    </location>
</feature>
<feature type="sequence conflict" description="In Ref. 1; AAA40337 and 3; BAA14356." evidence="4" ref="1 3">
    <original>S</original>
    <variation>C</variation>
    <location>
        <position position="537"/>
    </location>
</feature>
<reference key="1">
    <citation type="journal article" date="1986" name="Cell">
        <title>Molecular cloning and sequence analysis of a haploid expressed gene encoding t complex polypeptide 1.</title>
        <authorList>
            <person name="Willison K.R."/>
            <person name="Dudley K."/>
            <person name="Potter J."/>
        </authorList>
    </citation>
    <scope>NUCLEOTIDE SEQUENCE [MRNA] (ISOFORM 1)</scope>
    <source>
        <tissue>Testis</tissue>
    </source>
</reference>
<reference key="2">
    <citation type="journal article" date="1990" name="Nucleic Acids Res.">
        <title>Nucleotide and amino-acid sequence of human testis-derived TCP1.</title>
        <authorList>
            <person name="Kirchhoff C."/>
            <person name="Willison K.R."/>
        </authorList>
    </citation>
    <scope>SEQUENCE REVISION</scope>
</reference>
<reference key="3">
    <citation type="journal article" date="1991" name="Gene">
        <title>Nucleotide sequence of mouse Tcp-1a cDNA.</title>
        <authorList>
            <person name="Kubota H."/>
            <person name="Morita T."/>
            <person name="Nagata T."/>
            <person name="Takemoto Y."/>
            <person name="Nozaki M."/>
            <person name="Gachelin G."/>
            <person name="Matsushiro A."/>
        </authorList>
    </citation>
    <scope>NUCLEOTIDE SEQUENCE [MRNA] (ISOFORM 1)</scope>
</reference>
<reference key="4">
    <citation type="journal article" date="1992" name="Gene">
        <title>Structure and expression of the gene encoding mouse T-complex polypeptide (Tcp-1).</title>
        <authorList>
            <person name="Kubota H."/>
            <person name="Willison K."/>
            <person name="Ashworth A."/>
            <person name="Nozaki M."/>
            <person name="Miyamoto H."/>
            <person name="Yamamoto H."/>
            <person name="Matsushiro A."/>
            <person name="Morita T."/>
        </authorList>
    </citation>
    <scope>NUCLEOTIDE SEQUENCE [GENOMIC DNA]</scope>
    <source>
        <strain>129/Sv</strain>
    </source>
</reference>
<reference key="5">
    <citation type="journal article" date="2005" name="Science">
        <title>The transcriptional landscape of the mammalian genome.</title>
        <authorList>
            <person name="Carninci P."/>
            <person name="Kasukawa T."/>
            <person name="Katayama S."/>
            <person name="Gough J."/>
            <person name="Frith M.C."/>
            <person name="Maeda N."/>
            <person name="Oyama R."/>
            <person name="Ravasi T."/>
            <person name="Lenhard B."/>
            <person name="Wells C."/>
            <person name="Kodzius R."/>
            <person name="Shimokawa K."/>
            <person name="Bajic V.B."/>
            <person name="Brenner S.E."/>
            <person name="Batalov S."/>
            <person name="Forrest A.R."/>
            <person name="Zavolan M."/>
            <person name="Davis M.J."/>
            <person name="Wilming L.G."/>
            <person name="Aidinis V."/>
            <person name="Allen J.E."/>
            <person name="Ambesi-Impiombato A."/>
            <person name="Apweiler R."/>
            <person name="Aturaliya R.N."/>
            <person name="Bailey T.L."/>
            <person name="Bansal M."/>
            <person name="Baxter L."/>
            <person name="Beisel K.W."/>
            <person name="Bersano T."/>
            <person name="Bono H."/>
            <person name="Chalk A.M."/>
            <person name="Chiu K.P."/>
            <person name="Choudhary V."/>
            <person name="Christoffels A."/>
            <person name="Clutterbuck D.R."/>
            <person name="Crowe M.L."/>
            <person name="Dalla E."/>
            <person name="Dalrymple B.P."/>
            <person name="de Bono B."/>
            <person name="Della Gatta G."/>
            <person name="di Bernardo D."/>
            <person name="Down T."/>
            <person name="Engstrom P."/>
            <person name="Fagiolini M."/>
            <person name="Faulkner G."/>
            <person name="Fletcher C.F."/>
            <person name="Fukushima T."/>
            <person name="Furuno M."/>
            <person name="Futaki S."/>
            <person name="Gariboldi M."/>
            <person name="Georgii-Hemming P."/>
            <person name="Gingeras T.R."/>
            <person name="Gojobori T."/>
            <person name="Green R.E."/>
            <person name="Gustincich S."/>
            <person name="Harbers M."/>
            <person name="Hayashi Y."/>
            <person name="Hensch T.K."/>
            <person name="Hirokawa N."/>
            <person name="Hill D."/>
            <person name="Huminiecki L."/>
            <person name="Iacono M."/>
            <person name="Ikeo K."/>
            <person name="Iwama A."/>
            <person name="Ishikawa T."/>
            <person name="Jakt M."/>
            <person name="Kanapin A."/>
            <person name="Katoh M."/>
            <person name="Kawasawa Y."/>
            <person name="Kelso J."/>
            <person name="Kitamura H."/>
            <person name="Kitano H."/>
            <person name="Kollias G."/>
            <person name="Krishnan S.P."/>
            <person name="Kruger A."/>
            <person name="Kummerfeld S.K."/>
            <person name="Kurochkin I.V."/>
            <person name="Lareau L.F."/>
            <person name="Lazarevic D."/>
            <person name="Lipovich L."/>
            <person name="Liu J."/>
            <person name="Liuni S."/>
            <person name="McWilliam S."/>
            <person name="Madan Babu M."/>
            <person name="Madera M."/>
            <person name="Marchionni L."/>
            <person name="Matsuda H."/>
            <person name="Matsuzawa S."/>
            <person name="Miki H."/>
            <person name="Mignone F."/>
            <person name="Miyake S."/>
            <person name="Morris K."/>
            <person name="Mottagui-Tabar S."/>
            <person name="Mulder N."/>
            <person name="Nakano N."/>
            <person name="Nakauchi H."/>
            <person name="Ng P."/>
            <person name="Nilsson R."/>
            <person name="Nishiguchi S."/>
            <person name="Nishikawa S."/>
            <person name="Nori F."/>
            <person name="Ohara O."/>
            <person name="Okazaki Y."/>
            <person name="Orlando V."/>
            <person name="Pang K.C."/>
            <person name="Pavan W.J."/>
            <person name="Pavesi G."/>
            <person name="Pesole G."/>
            <person name="Petrovsky N."/>
            <person name="Piazza S."/>
            <person name="Reed J."/>
            <person name="Reid J.F."/>
            <person name="Ring B.Z."/>
            <person name="Ringwald M."/>
            <person name="Rost B."/>
            <person name="Ruan Y."/>
            <person name="Salzberg S.L."/>
            <person name="Sandelin A."/>
            <person name="Schneider C."/>
            <person name="Schoenbach C."/>
            <person name="Sekiguchi K."/>
            <person name="Semple C.A."/>
            <person name="Seno S."/>
            <person name="Sessa L."/>
            <person name="Sheng Y."/>
            <person name="Shibata Y."/>
            <person name="Shimada H."/>
            <person name="Shimada K."/>
            <person name="Silva D."/>
            <person name="Sinclair B."/>
            <person name="Sperling S."/>
            <person name="Stupka E."/>
            <person name="Sugiura K."/>
            <person name="Sultana R."/>
            <person name="Takenaka Y."/>
            <person name="Taki K."/>
            <person name="Tammoja K."/>
            <person name="Tan S.L."/>
            <person name="Tang S."/>
            <person name="Taylor M.S."/>
            <person name="Tegner J."/>
            <person name="Teichmann S.A."/>
            <person name="Ueda H.R."/>
            <person name="van Nimwegen E."/>
            <person name="Verardo R."/>
            <person name="Wei C.L."/>
            <person name="Yagi K."/>
            <person name="Yamanishi H."/>
            <person name="Zabarovsky E."/>
            <person name="Zhu S."/>
            <person name="Zimmer A."/>
            <person name="Hide W."/>
            <person name="Bult C."/>
            <person name="Grimmond S.M."/>
            <person name="Teasdale R.D."/>
            <person name="Liu E.T."/>
            <person name="Brusic V."/>
            <person name="Quackenbush J."/>
            <person name="Wahlestedt C."/>
            <person name="Mattick J.S."/>
            <person name="Hume D.A."/>
            <person name="Kai C."/>
            <person name="Sasaki D."/>
            <person name="Tomaru Y."/>
            <person name="Fukuda S."/>
            <person name="Kanamori-Katayama M."/>
            <person name="Suzuki M."/>
            <person name="Aoki J."/>
            <person name="Arakawa T."/>
            <person name="Iida J."/>
            <person name="Imamura K."/>
            <person name="Itoh M."/>
            <person name="Kato T."/>
            <person name="Kawaji H."/>
            <person name="Kawagashira N."/>
            <person name="Kawashima T."/>
            <person name="Kojima M."/>
            <person name="Kondo S."/>
            <person name="Konno H."/>
            <person name="Nakano K."/>
            <person name="Ninomiya N."/>
            <person name="Nishio T."/>
            <person name="Okada M."/>
            <person name="Plessy C."/>
            <person name="Shibata K."/>
            <person name="Shiraki T."/>
            <person name="Suzuki S."/>
            <person name="Tagami M."/>
            <person name="Waki K."/>
            <person name="Watahiki A."/>
            <person name="Okamura-Oho Y."/>
            <person name="Suzuki H."/>
            <person name="Kawai J."/>
            <person name="Hayashizaki Y."/>
        </authorList>
    </citation>
    <scope>NUCLEOTIDE SEQUENCE [LARGE SCALE MRNA] (ISOFORMS 1 AND 2)</scope>
    <source>
        <strain>C57BL/6J</strain>
        <tissue>Bone marrow</tissue>
        <tissue>Placenta</tissue>
    </source>
</reference>
<reference key="6">
    <citation type="journal article" date="2004" name="Genome Res.">
        <title>The status, quality, and expansion of the NIH full-length cDNA project: the Mammalian Gene Collection (MGC).</title>
        <authorList>
            <consortium name="The MGC Project Team"/>
        </authorList>
    </citation>
    <scope>NUCLEOTIDE SEQUENCE [LARGE SCALE MRNA] (ISOFORM 1)</scope>
    <source>
        <strain>FVB/N</strain>
        <tissue>Mammary gland</tissue>
    </source>
</reference>
<reference key="7">
    <citation type="submission" date="2008-02" db="UniProtKB">
        <authorList>
            <person name="Bienvenut W.V."/>
            <person name="Sandilands E."/>
            <person name="Serrels B."/>
            <person name="Brunton V.G."/>
            <person name="Frame M.C."/>
        </authorList>
    </citation>
    <scope>PROTEIN SEQUENCE OF 1-11; 34-43; 64-73; 190-199; 234-243; 371-378; 434-466 AND 485-496</scope>
    <scope>ACETYLATION AT MET-1</scope>
    <scope>IDENTIFICATION BY MASS SPECTROMETRY</scope>
    <source>
        <tissue>Embryonic fibroblast</tissue>
    </source>
</reference>
<reference key="8">
    <citation type="submission" date="2007-04" db="UniProtKB">
        <authorList>
            <person name="Lubec G."/>
            <person name="Klug S."/>
            <person name="Kang S.U."/>
        </authorList>
    </citation>
    <scope>PROTEIN SEQUENCE OF 19-63; 112-122; 131-145; 190-199; 234-243; 248-259; 299-309; 434-443; 469-480; 500-510 AND 516-526</scope>
    <scope>IDENTIFICATION BY MASS SPECTROMETRY</scope>
    <source>
        <strain>C57BL/6J</strain>
        <tissue>Brain</tissue>
        <tissue>Hippocampus</tissue>
    </source>
</reference>
<reference key="9">
    <citation type="submission" date="2007-07" db="UniProtKB">
        <authorList>
            <person name="Lubec G."/>
            <person name="Yang J.W."/>
            <person name="Zigmond M."/>
        </authorList>
    </citation>
    <scope>PROTEIN SEQUENCE OF 485-496</scope>
    <source>
        <tissue>Brain</tissue>
    </source>
</reference>
<reference key="10">
    <citation type="journal article" date="2010" name="Cell">
        <title>A tissue-specific atlas of mouse protein phosphorylation and expression.</title>
        <authorList>
            <person name="Huttlin E.L."/>
            <person name="Jedrychowski M.P."/>
            <person name="Elias J.E."/>
            <person name="Goswami T."/>
            <person name="Rad R."/>
            <person name="Beausoleil S.A."/>
            <person name="Villen J."/>
            <person name="Haas W."/>
            <person name="Sowa M.E."/>
            <person name="Gygi S.P."/>
        </authorList>
    </citation>
    <scope>PHOSPHORYLATION [LARGE SCALE ANALYSIS] AT SER-544 AND SER-551</scope>
    <scope>IDENTIFICATION BY MASS SPECTROMETRY [LARGE SCALE ANALYSIS]</scope>
    <source>
        <tissue>Brain</tissue>
        <tissue>Brown adipose tissue</tissue>
        <tissue>Heart</tissue>
        <tissue>Kidney</tissue>
        <tissue>Liver</tissue>
        <tissue>Lung</tissue>
        <tissue>Pancreas</tissue>
        <tissue>Spleen</tissue>
        <tissue>Testis</tissue>
    </source>
</reference>
<reference key="11">
    <citation type="journal article" date="2013" name="Mol. Cell">
        <title>SIRT5-mediated lysine desuccinylation impacts diverse metabolic pathways.</title>
        <authorList>
            <person name="Park J."/>
            <person name="Chen Y."/>
            <person name="Tishkoff D.X."/>
            <person name="Peng C."/>
            <person name="Tan M."/>
            <person name="Dai L."/>
            <person name="Xie Z."/>
            <person name="Zhang Y."/>
            <person name="Zwaans B.M."/>
            <person name="Skinner M.E."/>
            <person name="Lombard D.B."/>
            <person name="Zhao Y."/>
        </authorList>
    </citation>
    <scope>ACETYLATION [LARGE SCALE ANALYSIS] AT LYS-400 AND LYS-494</scope>
    <scope>IDENTIFICATION BY MASS SPECTROMETRY [LARGE SCALE ANALYSIS]</scope>
    <source>
        <tissue>Embryonic fibroblast</tissue>
    </source>
</reference>
<name>TCPA_MOUSE</name>
<comment type="function">
    <text evidence="1">Component of the chaperonin-containing T-complex (TRiC), a molecular chaperone complex that assists the folding of actin, tubulin and other proteins upon ATP hydrolysis. The TRiC complex mediates the folding of WRAP53/TCAB1, thereby regulating telomere maintenance. As part of the TRiC complex may play a role in the assembly of BBSome, a complex involved in ciliogenesis regulating transports vesicles to the cilia.</text>
</comment>
<comment type="catalytic activity">
    <reaction evidence="1">
        <text>ATP + H2O = ADP + phosphate + H(+)</text>
        <dbReference type="Rhea" id="RHEA:13065"/>
        <dbReference type="ChEBI" id="CHEBI:15377"/>
        <dbReference type="ChEBI" id="CHEBI:15378"/>
        <dbReference type="ChEBI" id="CHEBI:30616"/>
        <dbReference type="ChEBI" id="CHEBI:43474"/>
        <dbReference type="ChEBI" id="CHEBI:456216"/>
    </reaction>
</comment>
<comment type="subunit">
    <text evidence="1">Component of the chaperonin-containing T-complex (TRiC), a hexadecamer composed of two identical back-to-back stacked rings enclosing a protein folding chamber. Each ring is made up of eight different subunits: TCP1/CCT1, CCT2, CCT3, CCT4, CCT5, CCT6A/CCT6, CCT7, CCT8. Interacts with PACRG. Interacts with GBA1. Interacts with DLEC1.</text>
</comment>
<comment type="subcellular location">
    <subcellularLocation>
        <location evidence="1">Cytoplasm</location>
        <location evidence="1">Cytosol</location>
    </subcellularLocation>
    <subcellularLocation>
        <location evidence="1">Cytoplasm</location>
        <location evidence="1">Cytoskeleton</location>
        <location evidence="1">Microtubule organizing center</location>
        <location evidence="1">Centrosome</location>
    </subcellularLocation>
</comment>
<comment type="alternative products">
    <event type="alternative splicing"/>
    <isoform>
        <id>P11983-1</id>
        <name>1</name>
        <sequence type="displayed"/>
    </isoform>
    <isoform>
        <id>P11983-2</id>
        <name>2</name>
        <sequence type="described" ref="VSP_024734 VSP_024735"/>
    </isoform>
</comment>
<comment type="similarity">
    <text evidence="4">Belongs to the TCP-1 chaperonin family.</text>
</comment>
<comment type="sequence caution" evidence="4">
    <conflict type="frameshift">
        <sequence resource="EMBL-CDS" id="AAA40337"/>
    </conflict>
</comment>
<comment type="sequence caution" evidence="4">
    <conflict type="frameshift">
        <sequence resource="EMBL-CDS" id="AAA40338"/>
    </conflict>
</comment>
<dbReference type="EC" id="3.6.1.-" evidence="1"/>
<dbReference type="EMBL" id="M20130">
    <property type="protein sequence ID" value="AAA40337.1"/>
    <property type="status" value="ALT_FRAME"/>
    <property type="molecule type" value="mRNA"/>
</dbReference>
<dbReference type="EMBL" id="M12899">
    <property type="protein sequence ID" value="AAA40338.1"/>
    <property type="status" value="ALT_FRAME"/>
    <property type="molecule type" value="mRNA"/>
</dbReference>
<dbReference type="EMBL" id="D90344">
    <property type="protein sequence ID" value="BAA14356.1"/>
    <property type="molecule type" value="mRNA"/>
</dbReference>
<dbReference type="EMBL" id="D10606">
    <property type="protein sequence ID" value="BAA01461.1"/>
    <property type="molecule type" value="Genomic_DNA"/>
</dbReference>
<dbReference type="EMBL" id="S46763">
    <property type="protein sequence ID" value="AAB23855.1"/>
    <property type="molecule type" value="Genomic_DNA"/>
</dbReference>
<dbReference type="EMBL" id="AK149611">
    <property type="protein sequence ID" value="BAE28989.1"/>
    <property type="molecule type" value="mRNA"/>
</dbReference>
<dbReference type="EMBL" id="AK149755">
    <property type="protein sequence ID" value="BAE29063.1"/>
    <property type="molecule type" value="mRNA"/>
</dbReference>
<dbReference type="EMBL" id="AK151068">
    <property type="protein sequence ID" value="BAE30084.1"/>
    <property type="molecule type" value="mRNA"/>
</dbReference>
<dbReference type="EMBL" id="AK151445">
    <property type="protein sequence ID" value="BAE30407.1"/>
    <property type="molecule type" value="mRNA"/>
</dbReference>
<dbReference type="EMBL" id="AK152641">
    <property type="protein sequence ID" value="BAE31381.1"/>
    <property type="molecule type" value="mRNA"/>
</dbReference>
<dbReference type="EMBL" id="AK153430">
    <property type="protein sequence ID" value="BAE31988.1"/>
    <property type="molecule type" value="mRNA"/>
</dbReference>
<dbReference type="EMBL" id="AK165665">
    <property type="protein sequence ID" value="BAE38327.1"/>
    <property type="molecule type" value="mRNA"/>
</dbReference>
<dbReference type="EMBL" id="AK166828">
    <property type="protein sequence ID" value="BAE39052.1"/>
    <property type="molecule type" value="mRNA"/>
</dbReference>
<dbReference type="EMBL" id="AK166966">
    <property type="protein sequence ID" value="BAE39149.1"/>
    <property type="molecule type" value="mRNA"/>
</dbReference>
<dbReference type="EMBL" id="AK167529">
    <property type="protein sequence ID" value="BAE39599.1"/>
    <property type="molecule type" value="mRNA"/>
</dbReference>
<dbReference type="EMBL" id="BC003809">
    <property type="protein sequence ID" value="AAH03809.1"/>
    <property type="molecule type" value="mRNA"/>
</dbReference>
<dbReference type="CCDS" id="CCDS28397.1">
    <molecule id="P11983-1"/>
</dbReference>
<dbReference type="CCDS" id="CCDS70760.1">
    <molecule id="P11983-2"/>
</dbReference>
<dbReference type="PIR" id="B24059">
    <property type="entry name" value="B24059"/>
</dbReference>
<dbReference type="PIR" id="JC1443">
    <property type="entry name" value="JC1443"/>
</dbReference>
<dbReference type="RefSeq" id="NP_001277641.1">
    <molecule id="P11983-2"/>
    <property type="nucleotide sequence ID" value="NM_001290712.1"/>
</dbReference>
<dbReference type="RefSeq" id="NP_038714.2">
    <molecule id="P11983-1"/>
    <property type="nucleotide sequence ID" value="NM_013686.4"/>
</dbReference>
<dbReference type="SMR" id="P11983"/>
<dbReference type="BioGRID" id="204044">
    <property type="interactions" value="60"/>
</dbReference>
<dbReference type="CORUM" id="P11983"/>
<dbReference type="DIP" id="DIP-32342N"/>
<dbReference type="FunCoup" id="P11983">
    <property type="interactions" value="3570"/>
</dbReference>
<dbReference type="IntAct" id="P11983">
    <property type="interactions" value="14"/>
</dbReference>
<dbReference type="MINT" id="P11983"/>
<dbReference type="STRING" id="10090.ENSMUSP00000116108"/>
<dbReference type="GlyGen" id="P11983">
    <property type="glycosylation" value="1 site, 1 O-linked glycan (1 site)"/>
</dbReference>
<dbReference type="iPTMnet" id="P11983"/>
<dbReference type="MetOSite" id="P11983"/>
<dbReference type="PhosphoSitePlus" id="P11983"/>
<dbReference type="SwissPalm" id="P11983"/>
<dbReference type="REPRODUCTION-2DPAGE" id="IPI00459493"/>
<dbReference type="REPRODUCTION-2DPAGE" id="P11983"/>
<dbReference type="jPOST" id="P11983"/>
<dbReference type="PaxDb" id="10090-ENSMUSP00000116108"/>
<dbReference type="PeptideAtlas" id="P11983"/>
<dbReference type="ProteomicsDB" id="263264">
    <molecule id="P11983-1"/>
</dbReference>
<dbReference type="ProteomicsDB" id="263265">
    <molecule id="P11983-2"/>
</dbReference>
<dbReference type="Pumba" id="P11983"/>
<dbReference type="Antibodypedia" id="20023">
    <property type="antibodies" value="668 antibodies from 38 providers"/>
</dbReference>
<dbReference type="DNASU" id="21454"/>
<dbReference type="Ensembl" id="ENSMUST00000089024.13">
    <molecule id="P11983-2"/>
    <property type="protein sequence ID" value="ENSMUSP00000086418.7"/>
    <property type="gene ID" value="ENSMUSG00000068039.14"/>
</dbReference>
<dbReference type="Ensembl" id="ENSMUST00000151287.8">
    <molecule id="P11983-1"/>
    <property type="protein sequence ID" value="ENSMUSP00000116108.2"/>
    <property type="gene ID" value="ENSMUSG00000068039.14"/>
</dbReference>
<dbReference type="GeneID" id="21454"/>
<dbReference type="KEGG" id="mmu:21454"/>
<dbReference type="UCSC" id="uc008all.2">
    <molecule id="P11983-1"/>
    <property type="organism name" value="mouse"/>
</dbReference>
<dbReference type="UCSC" id="uc008alm.2">
    <molecule id="P11983-2"/>
    <property type="organism name" value="mouse"/>
</dbReference>
<dbReference type="AGR" id="MGI:98535"/>
<dbReference type="CTD" id="6950"/>
<dbReference type="MGI" id="MGI:98535">
    <property type="gene designation" value="Tcp1"/>
</dbReference>
<dbReference type="VEuPathDB" id="HostDB:ENSMUSG00000068039"/>
<dbReference type="eggNOG" id="KOG0360">
    <property type="taxonomic scope" value="Eukaryota"/>
</dbReference>
<dbReference type="GeneTree" id="ENSGT00550000074878"/>
<dbReference type="HOGENOM" id="CLU_008891_5_1_1"/>
<dbReference type="InParanoid" id="P11983"/>
<dbReference type="OMA" id="RGPNDYQ"/>
<dbReference type="OrthoDB" id="496at2759"/>
<dbReference type="PhylomeDB" id="P11983"/>
<dbReference type="TreeFam" id="TF106331"/>
<dbReference type="BRENDA" id="3.6.4.B10">
    <property type="organism ID" value="3474"/>
</dbReference>
<dbReference type="Reactome" id="R-MMU-390471">
    <property type="pathway name" value="Association of TriC/CCT with target proteins during biosynthesis"/>
</dbReference>
<dbReference type="Reactome" id="R-MMU-6814122">
    <property type="pathway name" value="Cooperation of PDCL (PhLP1) and TRiC/CCT in G-protein beta folding"/>
</dbReference>
<dbReference type="BioGRID-ORCS" id="21454">
    <property type="hits" value="32 hits in 76 CRISPR screens"/>
</dbReference>
<dbReference type="CD-CODE" id="CE726F99">
    <property type="entry name" value="Postsynaptic density"/>
</dbReference>
<dbReference type="ChiTaRS" id="Tcp1">
    <property type="organism name" value="mouse"/>
</dbReference>
<dbReference type="PRO" id="PR:P11983"/>
<dbReference type="Proteomes" id="UP000000589">
    <property type="component" value="Chromosome 17"/>
</dbReference>
<dbReference type="RNAct" id="P11983">
    <property type="molecule type" value="protein"/>
</dbReference>
<dbReference type="Bgee" id="ENSMUSG00000068039">
    <property type="expression patterns" value="Expressed in spermatid and 71 other cell types or tissues"/>
</dbReference>
<dbReference type="ExpressionAtlas" id="P11983">
    <property type="expression patterns" value="baseline and differential"/>
</dbReference>
<dbReference type="GO" id="GO:0001669">
    <property type="term" value="C:acrosomal vesicle"/>
    <property type="evidence" value="ECO:0000314"/>
    <property type="project" value="MGI"/>
</dbReference>
<dbReference type="GO" id="GO:0044297">
    <property type="term" value="C:cell body"/>
    <property type="evidence" value="ECO:0000314"/>
    <property type="project" value="MGI"/>
</dbReference>
<dbReference type="GO" id="GO:0005813">
    <property type="term" value="C:centrosome"/>
    <property type="evidence" value="ECO:0000266"/>
    <property type="project" value="MGI"/>
</dbReference>
<dbReference type="GO" id="GO:0005832">
    <property type="term" value="C:chaperonin-containing T-complex"/>
    <property type="evidence" value="ECO:0000314"/>
    <property type="project" value="MGI"/>
</dbReference>
<dbReference type="GO" id="GO:0005794">
    <property type="term" value="C:Golgi apparatus"/>
    <property type="evidence" value="ECO:0000314"/>
    <property type="project" value="MGI"/>
</dbReference>
<dbReference type="GO" id="GO:0000792">
    <property type="term" value="C:heterochromatin"/>
    <property type="evidence" value="ECO:0000314"/>
    <property type="project" value="MGI"/>
</dbReference>
<dbReference type="GO" id="GO:0005874">
    <property type="term" value="C:microtubule"/>
    <property type="evidence" value="ECO:0007669"/>
    <property type="project" value="Ensembl"/>
</dbReference>
<dbReference type="GO" id="GO:0005815">
    <property type="term" value="C:microtubule organizing center"/>
    <property type="evidence" value="ECO:0000314"/>
    <property type="project" value="MGI"/>
</dbReference>
<dbReference type="GO" id="GO:0043209">
    <property type="term" value="C:myelin sheath"/>
    <property type="evidence" value="ECO:0007005"/>
    <property type="project" value="UniProtKB"/>
</dbReference>
<dbReference type="GO" id="GO:0000242">
    <property type="term" value="C:pericentriolar material"/>
    <property type="evidence" value="ECO:0000314"/>
    <property type="project" value="MGI"/>
</dbReference>
<dbReference type="GO" id="GO:0002199">
    <property type="term" value="C:zona pellucida receptor complex"/>
    <property type="evidence" value="ECO:0000314"/>
    <property type="project" value="MGI"/>
</dbReference>
<dbReference type="GO" id="GO:0005524">
    <property type="term" value="F:ATP binding"/>
    <property type="evidence" value="ECO:0007669"/>
    <property type="project" value="UniProtKB-KW"/>
</dbReference>
<dbReference type="GO" id="GO:0016887">
    <property type="term" value="F:ATP hydrolysis activity"/>
    <property type="evidence" value="ECO:0007669"/>
    <property type="project" value="InterPro"/>
</dbReference>
<dbReference type="GO" id="GO:0140662">
    <property type="term" value="F:ATP-dependent protein folding chaperone"/>
    <property type="evidence" value="ECO:0007669"/>
    <property type="project" value="InterPro"/>
</dbReference>
<dbReference type="GO" id="GO:0031625">
    <property type="term" value="F:ubiquitin protein ligase binding"/>
    <property type="evidence" value="ECO:0007669"/>
    <property type="project" value="Ensembl"/>
</dbReference>
<dbReference type="GO" id="GO:0051082">
    <property type="term" value="F:unfolded protein binding"/>
    <property type="evidence" value="ECO:0007669"/>
    <property type="project" value="InterPro"/>
</dbReference>
<dbReference type="GO" id="GO:0007339">
    <property type="term" value="P:binding of sperm to zona pellucida"/>
    <property type="evidence" value="ECO:0000314"/>
    <property type="project" value="MGI"/>
</dbReference>
<dbReference type="GO" id="GO:0051086">
    <property type="term" value="P:chaperone mediated protein folding independent of cofactor"/>
    <property type="evidence" value="ECO:0007669"/>
    <property type="project" value="Ensembl"/>
</dbReference>
<dbReference type="GO" id="GO:1904851">
    <property type="term" value="P:positive regulation of establishment of protein localization to telomere"/>
    <property type="evidence" value="ECO:0007669"/>
    <property type="project" value="Ensembl"/>
</dbReference>
<dbReference type="GO" id="GO:1904874">
    <property type="term" value="P:positive regulation of telomerase RNA localization to Cajal body"/>
    <property type="evidence" value="ECO:0007669"/>
    <property type="project" value="Ensembl"/>
</dbReference>
<dbReference type="GO" id="GO:0032212">
    <property type="term" value="P:positive regulation of telomere maintenance via telomerase"/>
    <property type="evidence" value="ECO:0007669"/>
    <property type="project" value="Ensembl"/>
</dbReference>
<dbReference type="GO" id="GO:0050821">
    <property type="term" value="P:protein stabilization"/>
    <property type="evidence" value="ECO:0007669"/>
    <property type="project" value="Ensembl"/>
</dbReference>
<dbReference type="GO" id="GO:0090666">
    <property type="term" value="P:scaRNA localization to Cajal body"/>
    <property type="evidence" value="ECO:0007669"/>
    <property type="project" value="Ensembl"/>
</dbReference>
<dbReference type="CDD" id="cd03335">
    <property type="entry name" value="TCP1_alpha"/>
    <property type="match status" value="1"/>
</dbReference>
<dbReference type="FunFam" id="3.50.7.10:FF:000009">
    <property type="entry name" value="T-complex protein 1 subunit alpha"/>
    <property type="match status" value="1"/>
</dbReference>
<dbReference type="FunFam" id="3.30.260.10:FF:000022">
    <property type="entry name" value="T-complex protein 1 subunit eta"/>
    <property type="match status" value="1"/>
</dbReference>
<dbReference type="FunFam" id="1.10.560.10:FF:000070">
    <property type="entry name" value="Uncharacterized protein"/>
    <property type="match status" value="1"/>
</dbReference>
<dbReference type="FunFam" id="3.30.260.10:FF:000040">
    <property type="entry name" value="Uncharacterized protein"/>
    <property type="match status" value="1"/>
</dbReference>
<dbReference type="Gene3D" id="3.50.7.10">
    <property type="entry name" value="GroEL"/>
    <property type="match status" value="1"/>
</dbReference>
<dbReference type="Gene3D" id="1.10.560.10">
    <property type="entry name" value="GroEL-like equatorial domain"/>
    <property type="match status" value="1"/>
</dbReference>
<dbReference type="Gene3D" id="3.30.260.10">
    <property type="entry name" value="TCP-1-like chaperonin intermediate domain"/>
    <property type="match status" value="1"/>
</dbReference>
<dbReference type="InterPro" id="IPR012715">
    <property type="entry name" value="Chap_CCT_alpha"/>
</dbReference>
<dbReference type="InterPro" id="IPR017998">
    <property type="entry name" value="Chaperone_TCP-1"/>
</dbReference>
<dbReference type="InterPro" id="IPR002194">
    <property type="entry name" value="Chaperonin_TCP-1_CS"/>
</dbReference>
<dbReference type="InterPro" id="IPR002423">
    <property type="entry name" value="Cpn60/GroEL/TCP-1"/>
</dbReference>
<dbReference type="InterPro" id="IPR027409">
    <property type="entry name" value="GroEL-like_apical_dom_sf"/>
</dbReference>
<dbReference type="InterPro" id="IPR027413">
    <property type="entry name" value="GROEL-like_equatorial_sf"/>
</dbReference>
<dbReference type="InterPro" id="IPR027410">
    <property type="entry name" value="TCP-1-like_intermed_sf"/>
</dbReference>
<dbReference type="InterPro" id="IPR053374">
    <property type="entry name" value="TCP-1_chaperonin"/>
</dbReference>
<dbReference type="InterPro" id="IPR054827">
    <property type="entry name" value="thermosome_alpha"/>
</dbReference>
<dbReference type="NCBIfam" id="TIGR02340">
    <property type="entry name" value="chap_CCT_alpha"/>
    <property type="match status" value="1"/>
</dbReference>
<dbReference type="NCBIfam" id="NF041082">
    <property type="entry name" value="thermosome_alpha"/>
    <property type="match status" value="1"/>
</dbReference>
<dbReference type="NCBIfam" id="NF041083">
    <property type="entry name" value="thermosome_beta"/>
    <property type="match status" value="1"/>
</dbReference>
<dbReference type="PANTHER" id="PTHR11353">
    <property type="entry name" value="CHAPERONIN"/>
    <property type="match status" value="1"/>
</dbReference>
<dbReference type="Pfam" id="PF00118">
    <property type="entry name" value="Cpn60_TCP1"/>
    <property type="match status" value="1"/>
</dbReference>
<dbReference type="PRINTS" id="PR00304">
    <property type="entry name" value="TCOMPLEXTCP1"/>
</dbReference>
<dbReference type="SUPFAM" id="SSF52029">
    <property type="entry name" value="GroEL apical domain-like"/>
    <property type="match status" value="1"/>
</dbReference>
<dbReference type="SUPFAM" id="SSF48592">
    <property type="entry name" value="GroEL equatorial domain-like"/>
    <property type="match status" value="1"/>
</dbReference>
<dbReference type="SUPFAM" id="SSF54849">
    <property type="entry name" value="GroEL-intermediate domain like"/>
    <property type="match status" value="1"/>
</dbReference>
<dbReference type="PROSITE" id="PS00750">
    <property type="entry name" value="TCP1_1"/>
    <property type="match status" value="1"/>
</dbReference>
<dbReference type="PROSITE" id="PS00751">
    <property type="entry name" value="TCP1_2"/>
    <property type="match status" value="1"/>
</dbReference>
<dbReference type="PROSITE" id="PS00995">
    <property type="entry name" value="TCP1_3"/>
    <property type="match status" value="1"/>
</dbReference>
<accession>P11983</accession>
<accession>P11984</accession>
<accession>Q3TJ96</accession>
<accession>Q3TKU1</accession>
<accession>Q3U5T8</accession>
<accession>Q3U7I8</accession>
<accession>Q3UAA8</accession>
<accession>Q3UB80</accession>
<accession>Q3UE48</accession>
<sequence>MEGPLSVFGDRSTGEAVRSQNVMAAASIANIVKSSFGPVGLDKMLVDDIGDVTITNDGATILKLLEVEHPAAKVLCELADLQDKEVGDGTTSVVIIAAELLKNADELVKQKIHPTSVISGYRLACKEAVRYINENLIINTDELGRDCLINAAKTSMSSKIIGINGDYFANMVVDAVLAVKYTDARGQPRYPVNSVNILKAHGRSQIESMLINGYALNCVVGSQGMPKRIVNAKIACLDFSLQKTKMKLGVQVVITDPEKLDQIRQRESDITKERIQKILATGANVILTTGGIDDMYLKYFVEAGAMAVRRVLKRDLKHVAKASGASILSTLANLEGEETFEVTMLGQAEEVVQERICDDELILIKNTKARTSASIILRGANDFMCDEMERSLHDALCVVKRVLELKSVVPGGGAVEAALSIYLENYATSMGSREQLAIAEFARSLLVIPNTLAVNAAQDSTDLVAKLRAFHNEAQVNPERKNLKWIGLDLVHGKPRDNKQAGVFEPTIVKVKSLKFATEAAITILRIDDLIKLHPESKDDKHGSYENAVHSGALDD</sequence>
<protein>
    <recommendedName>
        <fullName>T-complex protein 1 subunit alpha</fullName>
        <shortName>TCP-1-alpha</shortName>
        <ecNumber evidence="1">3.6.1.-</ecNumber>
    </recommendedName>
    <alternativeName>
        <fullName>CCT-alpha</fullName>
    </alternativeName>
    <alternativeName>
        <fullName>Tailless complex polypeptide 1A</fullName>
        <shortName>TCP-1-A</shortName>
    </alternativeName>
    <alternativeName>
        <fullName>Tailless complex polypeptide 1B</fullName>
        <shortName>TCP-1-B</shortName>
    </alternativeName>
</protein>
<keyword id="KW-0007">Acetylation</keyword>
<keyword id="KW-0025">Alternative splicing</keyword>
<keyword id="KW-0067">ATP-binding</keyword>
<keyword id="KW-0143">Chaperone</keyword>
<keyword id="KW-0963">Cytoplasm</keyword>
<keyword id="KW-0206">Cytoskeleton</keyword>
<keyword id="KW-0903">Direct protein sequencing</keyword>
<keyword id="KW-0378">Hydrolase</keyword>
<keyword id="KW-0460">Magnesium</keyword>
<keyword id="KW-0479">Metal-binding</keyword>
<keyword id="KW-0547">Nucleotide-binding</keyword>
<keyword id="KW-0597">Phosphoprotein</keyword>
<keyword id="KW-1185">Reference proteome</keyword>
<proteinExistence type="evidence at protein level"/>
<evidence type="ECO:0000250" key="1">
    <source>
        <dbReference type="UniProtKB" id="P17987"/>
    </source>
</evidence>
<evidence type="ECO:0000269" key="2">
    <source ref="7"/>
</evidence>
<evidence type="ECO:0000303" key="3">
    <source>
    </source>
</evidence>
<evidence type="ECO:0000305" key="4"/>
<evidence type="ECO:0007744" key="5">
    <source>
    </source>
</evidence>
<evidence type="ECO:0007744" key="6">
    <source>
    </source>
</evidence>
<gene>
    <name type="primary">Tcp1</name>
    <name type="synonym">Cct1</name>
    <name type="synonym">Ccta</name>
</gene>
<organism>
    <name type="scientific">Mus musculus</name>
    <name type="common">Mouse</name>
    <dbReference type="NCBI Taxonomy" id="10090"/>
    <lineage>
        <taxon>Eukaryota</taxon>
        <taxon>Metazoa</taxon>
        <taxon>Chordata</taxon>
        <taxon>Craniata</taxon>
        <taxon>Vertebrata</taxon>
        <taxon>Euteleostomi</taxon>
        <taxon>Mammalia</taxon>
        <taxon>Eutheria</taxon>
        <taxon>Euarchontoglires</taxon>
        <taxon>Glires</taxon>
        <taxon>Rodentia</taxon>
        <taxon>Myomorpha</taxon>
        <taxon>Muroidea</taxon>
        <taxon>Muridae</taxon>
        <taxon>Murinae</taxon>
        <taxon>Mus</taxon>
        <taxon>Mus</taxon>
    </lineage>
</organism>